<gene>
    <name evidence="1" type="primary">ureE</name>
    <name type="ordered locus">ABBFA_002594</name>
</gene>
<reference key="1">
    <citation type="journal article" date="2008" name="J. Bacteriol.">
        <title>Comparative genome sequence analysis of multidrug-resistant Acinetobacter baumannii.</title>
        <authorList>
            <person name="Adams M.D."/>
            <person name="Goglin K."/>
            <person name="Molyneaux N."/>
            <person name="Hujer K.M."/>
            <person name="Lavender H."/>
            <person name="Jamison J.J."/>
            <person name="MacDonald I.J."/>
            <person name="Martin K.M."/>
            <person name="Russo T."/>
            <person name="Campagnari A.A."/>
            <person name="Hujer A.M."/>
            <person name="Bonomo R.A."/>
            <person name="Gill S.R."/>
        </authorList>
    </citation>
    <scope>NUCLEOTIDE SEQUENCE [LARGE SCALE GENOMIC DNA]</scope>
    <source>
        <strain>AB307-0294</strain>
    </source>
</reference>
<evidence type="ECO:0000255" key="1">
    <source>
        <dbReference type="HAMAP-Rule" id="MF_00822"/>
    </source>
</evidence>
<dbReference type="EMBL" id="CP001172">
    <property type="protein sequence ID" value="ACJ59274.1"/>
    <property type="molecule type" value="Genomic_DNA"/>
</dbReference>
<dbReference type="RefSeq" id="WP_000708728.1">
    <property type="nucleotide sequence ID" value="NZ_CP001172.1"/>
</dbReference>
<dbReference type="SMR" id="B7GXU2"/>
<dbReference type="GeneID" id="92892978"/>
<dbReference type="HOGENOM" id="CLU_093757_2_0_6"/>
<dbReference type="Proteomes" id="UP000006924">
    <property type="component" value="Chromosome"/>
</dbReference>
<dbReference type="GO" id="GO:0005737">
    <property type="term" value="C:cytoplasm"/>
    <property type="evidence" value="ECO:0007669"/>
    <property type="project" value="UniProtKB-SubCell"/>
</dbReference>
<dbReference type="GO" id="GO:0016151">
    <property type="term" value="F:nickel cation binding"/>
    <property type="evidence" value="ECO:0007669"/>
    <property type="project" value="UniProtKB-UniRule"/>
</dbReference>
<dbReference type="GO" id="GO:0051082">
    <property type="term" value="F:unfolded protein binding"/>
    <property type="evidence" value="ECO:0007669"/>
    <property type="project" value="UniProtKB-UniRule"/>
</dbReference>
<dbReference type="GO" id="GO:0006457">
    <property type="term" value="P:protein folding"/>
    <property type="evidence" value="ECO:0007669"/>
    <property type="project" value="InterPro"/>
</dbReference>
<dbReference type="GO" id="GO:0065003">
    <property type="term" value="P:protein-containing complex assembly"/>
    <property type="evidence" value="ECO:0007669"/>
    <property type="project" value="InterPro"/>
</dbReference>
<dbReference type="GO" id="GO:0019627">
    <property type="term" value="P:urea metabolic process"/>
    <property type="evidence" value="ECO:0007669"/>
    <property type="project" value="InterPro"/>
</dbReference>
<dbReference type="CDD" id="cd00571">
    <property type="entry name" value="UreE"/>
    <property type="match status" value="1"/>
</dbReference>
<dbReference type="Gene3D" id="2.60.260.20">
    <property type="entry name" value="Urease metallochaperone UreE, N-terminal domain"/>
    <property type="match status" value="1"/>
</dbReference>
<dbReference type="Gene3D" id="3.30.70.790">
    <property type="entry name" value="UreE, C-terminal domain"/>
    <property type="match status" value="1"/>
</dbReference>
<dbReference type="HAMAP" id="MF_00822">
    <property type="entry name" value="UreE"/>
    <property type="match status" value="1"/>
</dbReference>
<dbReference type="InterPro" id="IPR012406">
    <property type="entry name" value="UreE"/>
</dbReference>
<dbReference type="InterPro" id="IPR007864">
    <property type="entry name" value="UreE_C_dom"/>
</dbReference>
<dbReference type="InterPro" id="IPR004029">
    <property type="entry name" value="UreE_N"/>
</dbReference>
<dbReference type="InterPro" id="IPR036118">
    <property type="entry name" value="UreE_N_sf"/>
</dbReference>
<dbReference type="NCBIfam" id="NF009751">
    <property type="entry name" value="PRK13261.1-1"/>
    <property type="match status" value="1"/>
</dbReference>
<dbReference type="Pfam" id="PF05194">
    <property type="entry name" value="UreE_C"/>
    <property type="match status" value="1"/>
</dbReference>
<dbReference type="Pfam" id="PF02814">
    <property type="entry name" value="UreE_N"/>
    <property type="match status" value="1"/>
</dbReference>
<dbReference type="PIRSF" id="PIRSF036402">
    <property type="entry name" value="Ureas_acces_UreE"/>
    <property type="match status" value="1"/>
</dbReference>
<dbReference type="SMART" id="SM00988">
    <property type="entry name" value="UreE_N"/>
    <property type="match status" value="1"/>
</dbReference>
<dbReference type="SUPFAM" id="SSF69737">
    <property type="entry name" value="Urease metallochaperone UreE, C-terminal domain"/>
    <property type="match status" value="1"/>
</dbReference>
<dbReference type="SUPFAM" id="SSF69287">
    <property type="entry name" value="Urease metallochaperone UreE, N-terminal domain"/>
    <property type="match status" value="1"/>
</dbReference>
<organism>
    <name type="scientific">Acinetobacter baumannii (strain AB307-0294)</name>
    <dbReference type="NCBI Taxonomy" id="557600"/>
    <lineage>
        <taxon>Bacteria</taxon>
        <taxon>Pseudomonadati</taxon>
        <taxon>Pseudomonadota</taxon>
        <taxon>Gammaproteobacteria</taxon>
        <taxon>Moraxellales</taxon>
        <taxon>Moraxellaceae</taxon>
        <taxon>Acinetobacter</taxon>
        <taxon>Acinetobacter calcoaceticus/baumannii complex</taxon>
    </lineage>
</organism>
<feature type="chain" id="PRO_1000197427" description="Urease accessory protein UreE">
    <location>
        <begin position="1"/>
        <end position="160"/>
    </location>
</feature>
<name>UREE_ACIB3</name>
<keyword id="KW-0143">Chaperone</keyword>
<keyword id="KW-0963">Cytoplasm</keyword>
<keyword id="KW-0533">Nickel</keyword>
<sequence>MKIYTQRLEDISPDQAFETVELTFDTRQKSRFRAALASGVDIGADLPRTGILRSGSYIATQEGDVLRVDAKPERLMKVTAQTEFDLLKAAYHLGNRHVPLMLTPTALYFEPDHVLAEMVEGLGLTVTETDHPFEPESGAYAQHSHDHRLSPIKALHHVHS</sequence>
<accession>B7GXU2</accession>
<comment type="function">
    <text evidence="1">Involved in urease metallocenter assembly. Binds nickel. Probably functions as a nickel donor during metallocenter assembly.</text>
</comment>
<comment type="subcellular location">
    <subcellularLocation>
        <location evidence="1">Cytoplasm</location>
    </subcellularLocation>
</comment>
<comment type="similarity">
    <text evidence="1">Belongs to the UreE family.</text>
</comment>
<proteinExistence type="inferred from homology"/>
<protein>
    <recommendedName>
        <fullName evidence="1">Urease accessory protein UreE</fullName>
    </recommendedName>
</protein>